<feature type="chain" id="PRO_0000461533" description="Sterol 14-alpha demethylase rstn2">
    <location>
        <begin position="1"/>
        <end position="513"/>
    </location>
</feature>
<feature type="transmembrane region" description="Helical" evidence="4">
    <location>
        <begin position="3"/>
        <end position="23"/>
    </location>
</feature>
<feature type="binding site" description="axial binding residue" evidence="2">
    <location>
        <position position="453"/>
    </location>
    <ligand>
        <name>heme</name>
        <dbReference type="ChEBI" id="CHEBI:30413"/>
    </ligand>
    <ligandPart>
        <name>Fe</name>
        <dbReference type="ChEBI" id="CHEBI:18248"/>
    </ligandPart>
</feature>
<proteinExistence type="evidence at protein level"/>
<comment type="function">
    <text evidence="5">Sterol 14-alpha demethylase; part of the gene cluster that mediates the biosynthesis of the tetrahydropyranyl antifungal agent restricticin that acts as an inhibitor of CYP51 and blocks the ergosterol biosynthesis (PubMed:33857369). Sterol 14-alpha-demethylase plays a critical role in the biosynthesis of ergosterol, the major sterol component in fungal membranes that participates in a variety of functions. Rtsn2 acts as a self-resistant CYP51 that contains mutations found in CYP51s isolated from azole resistance strains and that is not inhibited by the final product of the cluster, restricticin (PubMed:33857369).</text>
</comment>
<comment type="catalytic activity">
    <reaction evidence="3">
        <text>a 14alpha-methyl steroid + 3 reduced [NADPH--hemoprotein reductase] + 3 O2 = a Delta(14) steroid + formate + 3 oxidized [NADPH--hemoprotein reductase] + 4 H2O + 4 H(+)</text>
        <dbReference type="Rhea" id="RHEA:54028"/>
        <dbReference type="Rhea" id="RHEA-COMP:11964"/>
        <dbReference type="Rhea" id="RHEA-COMP:11965"/>
        <dbReference type="ChEBI" id="CHEBI:15377"/>
        <dbReference type="ChEBI" id="CHEBI:15378"/>
        <dbReference type="ChEBI" id="CHEBI:15379"/>
        <dbReference type="ChEBI" id="CHEBI:15740"/>
        <dbReference type="ChEBI" id="CHEBI:57618"/>
        <dbReference type="ChEBI" id="CHEBI:58210"/>
        <dbReference type="ChEBI" id="CHEBI:138029"/>
        <dbReference type="ChEBI" id="CHEBI:138031"/>
        <dbReference type="EC" id="1.14.14.154"/>
    </reaction>
    <physiologicalReaction direction="left-to-right" evidence="3">
        <dbReference type="Rhea" id="RHEA:54029"/>
    </physiologicalReaction>
</comment>
<comment type="catalytic activity">
    <reaction evidence="1">
        <text>a 14alpha-methyl steroid + reduced [NADPH--hemoprotein reductase] + O2 = a 14alpha-hydroxymethyl steroid + oxidized [NADPH--hemoprotein reductase] + H2O + H(+)</text>
        <dbReference type="Rhea" id="RHEA:68060"/>
        <dbReference type="Rhea" id="RHEA-COMP:11964"/>
        <dbReference type="Rhea" id="RHEA-COMP:11965"/>
        <dbReference type="ChEBI" id="CHEBI:15377"/>
        <dbReference type="ChEBI" id="CHEBI:15378"/>
        <dbReference type="ChEBI" id="CHEBI:15379"/>
        <dbReference type="ChEBI" id="CHEBI:57618"/>
        <dbReference type="ChEBI" id="CHEBI:58210"/>
        <dbReference type="ChEBI" id="CHEBI:138029"/>
        <dbReference type="ChEBI" id="CHEBI:176901"/>
    </reaction>
    <physiologicalReaction direction="left-to-right" evidence="1">
        <dbReference type="Rhea" id="RHEA:68061"/>
    </physiologicalReaction>
</comment>
<comment type="catalytic activity">
    <reaction evidence="1">
        <text>a 14alpha-hydroxymethyl steroid + reduced [NADPH--hemoprotein reductase] + O2 = a 14alpha-formyl steroid + oxidized [NADPH--hemoprotein reductase] + 2 H2O + H(+)</text>
        <dbReference type="Rhea" id="RHEA:68064"/>
        <dbReference type="Rhea" id="RHEA-COMP:11964"/>
        <dbReference type="Rhea" id="RHEA-COMP:11965"/>
        <dbReference type="ChEBI" id="CHEBI:15377"/>
        <dbReference type="ChEBI" id="CHEBI:15378"/>
        <dbReference type="ChEBI" id="CHEBI:15379"/>
        <dbReference type="ChEBI" id="CHEBI:57618"/>
        <dbReference type="ChEBI" id="CHEBI:58210"/>
        <dbReference type="ChEBI" id="CHEBI:176901"/>
        <dbReference type="ChEBI" id="CHEBI:176902"/>
    </reaction>
    <physiologicalReaction direction="left-to-right" evidence="1">
        <dbReference type="Rhea" id="RHEA:68065"/>
    </physiologicalReaction>
</comment>
<comment type="catalytic activity">
    <reaction evidence="1">
        <text>a 14alpha-formyl steroid + reduced [NADPH--hemoprotein reductase] + O2 = a Delta(14) steroid + formate + oxidized [NADPH--hemoprotein reductase] + H2O + 2 H(+)</text>
        <dbReference type="Rhea" id="RHEA:68068"/>
        <dbReference type="Rhea" id="RHEA-COMP:11964"/>
        <dbReference type="Rhea" id="RHEA-COMP:11965"/>
        <dbReference type="ChEBI" id="CHEBI:15377"/>
        <dbReference type="ChEBI" id="CHEBI:15378"/>
        <dbReference type="ChEBI" id="CHEBI:15379"/>
        <dbReference type="ChEBI" id="CHEBI:15740"/>
        <dbReference type="ChEBI" id="CHEBI:57618"/>
        <dbReference type="ChEBI" id="CHEBI:58210"/>
        <dbReference type="ChEBI" id="CHEBI:138031"/>
        <dbReference type="ChEBI" id="CHEBI:176902"/>
    </reaction>
    <physiologicalReaction direction="left-to-right" evidence="1">
        <dbReference type="Rhea" id="RHEA:68069"/>
    </physiologicalReaction>
</comment>
<comment type="catalytic activity">
    <reaction evidence="3">
        <text>lanosterol + 3 reduced [NADPH--hemoprotein reductase] + 3 O2 = 4,4-dimethyl-5alpha-cholesta-8,14,24-trien-3beta-ol + formate + 3 oxidized [NADPH--hemoprotein reductase] + 4 H2O + 4 H(+)</text>
        <dbReference type="Rhea" id="RHEA:25286"/>
        <dbReference type="Rhea" id="RHEA-COMP:11964"/>
        <dbReference type="Rhea" id="RHEA-COMP:11965"/>
        <dbReference type="ChEBI" id="CHEBI:15377"/>
        <dbReference type="ChEBI" id="CHEBI:15378"/>
        <dbReference type="ChEBI" id="CHEBI:15379"/>
        <dbReference type="ChEBI" id="CHEBI:15740"/>
        <dbReference type="ChEBI" id="CHEBI:16521"/>
        <dbReference type="ChEBI" id="CHEBI:17813"/>
        <dbReference type="ChEBI" id="CHEBI:57618"/>
        <dbReference type="ChEBI" id="CHEBI:58210"/>
        <dbReference type="EC" id="1.14.14.154"/>
    </reaction>
    <physiologicalReaction direction="left-to-right" evidence="3">
        <dbReference type="Rhea" id="RHEA:25287"/>
    </physiologicalReaction>
</comment>
<comment type="catalytic activity">
    <reaction evidence="1">
        <text>lanosterol + reduced [NADPH--hemoprotein reductase] + O2 = 32-hydroxylanosterol + oxidized [NADPH--hemoprotein reductase] + H2O + H(+)</text>
        <dbReference type="Rhea" id="RHEA:75103"/>
        <dbReference type="Rhea" id="RHEA-COMP:11964"/>
        <dbReference type="Rhea" id="RHEA-COMP:11965"/>
        <dbReference type="ChEBI" id="CHEBI:15377"/>
        <dbReference type="ChEBI" id="CHEBI:15378"/>
        <dbReference type="ChEBI" id="CHEBI:15379"/>
        <dbReference type="ChEBI" id="CHEBI:16521"/>
        <dbReference type="ChEBI" id="CHEBI:57618"/>
        <dbReference type="ChEBI" id="CHEBI:58210"/>
        <dbReference type="ChEBI" id="CHEBI:166806"/>
    </reaction>
    <physiologicalReaction direction="left-to-right" evidence="1">
        <dbReference type="Rhea" id="RHEA:75104"/>
    </physiologicalReaction>
</comment>
<comment type="catalytic activity">
    <reaction evidence="1">
        <text>32-hydroxylanosterol + reduced [NADPH--hemoprotein reductase] + O2 = 32-oxolanosterol + oxidized [NADPH--hemoprotein reductase] + 2 H2O + H(+)</text>
        <dbReference type="Rhea" id="RHEA:75107"/>
        <dbReference type="Rhea" id="RHEA-COMP:11964"/>
        <dbReference type="Rhea" id="RHEA-COMP:11965"/>
        <dbReference type="ChEBI" id="CHEBI:15377"/>
        <dbReference type="ChEBI" id="CHEBI:15378"/>
        <dbReference type="ChEBI" id="CHEBI:15379"/>
        <dbReference type="ChEBI" id="CHEBI:57618"/>
        <dbReference type="ChEBI" id="CHEBI:58210"/>
        <dbReference type="ChEBI" id="CHEBI:166681"/>
        <dbReference type="ChEBI" id="CHEBI:166806"/>
    </reaction>
    <physiologicalReaction direction="left-to-right" evidence="1">
        <dbReference type="Rhea" id="RHEA:75108"/>
    </physiologicalReaction>
</comment>
<comment type="catalytic activity">
    <reaction evidence="1">
        <text>32-oxolanosterol + reduced [NADPH--hemoprotein reductase] + O2 = 4,4-dimethyl-5alpha-cholesta-8,14,24-trien-3beta-ol + formate + oxidized [NADPH--hemoprotein reductase] + H2O + 2 H(+)</text>
        <dbReference type="Rhea" id="RHEA:75111"/>
        <dbReference type="Rhea" id="RHEA-COMP:11964"/>
        <dbReference type="Rhea" id="RHEA-COMP:11965"/>
        <dbReference type="ChEBI" id="CHEBI:15377"/>
        <dbReference type="ChEBI" id="CHEBI:15378"/>
        <dbReference type="ChEBI" id="CHEBI:15379"/>
        <dbReference type="ChEBI" id="CHEBI:15740"/>
        <dbReference type="ChEBI" id="CHEBI:17813"/>
        <dbReference type="ChEBI" id="CHEBI:57618"/>
        <dbReference type="ChEBI" id="CHEBI:58210"/>
        <dbReference type="ChEBI" id="CHEBI:166681"/>
    </reaction>
    <physiologicalReaction direction="left-to-right" evidence="1">
        <dbReference type="Rhea" id="RHEA:75112"/>
    </physiologicalReaction>
</comment>
<comment type="catalytic activity">
    <reaction evidence="3">
        <text>eburicol + 3 reduced [NADPH--hemoprotein reductase] + 3 O2 = 14-demethyleburicol + formate + 3 oxidized [NADPH--hemoprotein reductase] + 4 H2O + 4 H(+)</text>
        <dbReference type="Rhea" id="RHEA:75439"/>
        <dbReference type="Rhea" id="RHEA-COMP:11964"/>
        <dbReference type="Rhea" id="RHEA-COMP:11965"/>
        <dbReference type="ChEBI" id="CHEBI:15377"/>
        <dbReference type="ChEBI" id="CHEBI:15378"/>
        <dbReference type="ChEBI" id="CHEBI:15379"/>
        <dbReference type="ChEBI" id="CHEBI:15740"/>
        <dbReference type="ChEBI" id="CHEBI:57618"/>
        <dbReference type="ChEBI" id="CHEBI:58210"/>
        <dbReference type="ChEBI" id="CHEBI:70315"/>
        <dbReference type="ChEBI" id="CHEBI:194330"/>
    </reaction>
    <physiologicalReaction direction="left-to-right" evidence="3">
        <dbReference type="Rhea" id="RHEA:75440"/>
    </physiologicalReaction>
</comment>
<comment type="catalytic activity">
    <reaction evidence="1">
        <text>eburicol + reduced [NADPH--hemoprotein reductase] + O2 = 32-hydroxyeburicol + oxidized [NADPH--hemoprotein reductase] + H2O + H(+)</text>
        <dbReference type="Rhea" id="RHEA:75427"/>
        <dbReference type="Rhea" id="RHEA-COMP:11964"/>
        <dbReference type="Rhea" id="RHEA-COMP:11965"/>
        <dbReference type="ChEBI" id="CHEBI:15377"/>
        <dbReference type="ChEBI" id="CHEBI:15378"/>
        <dbReference type="ChEBI" id="CHEBI:15379"/>
        <dbReference type="ChEBI" id="CHEBI:57618"/>
        <dbReference type="ChEBI" id="CHEBI:58210"/>
        <dbReference type="ChEBI" id="CHEBI:70315"/>
        <dbReference type="ChEBI" id="CHEBI:194328"/>
    </reaction>
    <physiologicalReaction direction="left-to-right" evidence="1">
        <dbReference type="Rhea" id="RHEA:75428"/>
    </physiologicalReaction>
</comment>
<comment type="catalytic activity">
    <reaction evidence="1">
        <text>32-hydroxyeburicol + reduced [NADPH--hemoprotein reductase] + O2 = 32-oxoeburicol + oxidized [NADPH--hemoprotein reductase] + 2 H2O + H(+)</text>
        <dbReference type="Rhea" id="RHEA:75431"/>
        <dbReference type="Rhea" id="RHEA-COMP:11964"/>
        <dbReference type="Rhea" id="RHEA-COMP:11965"/>
        <dbReference type="ChEBI" id="CHEBI:15377"/>
        <dbReference type="ChEBI" id="CHEBI:15378"/>
        <dbReference type="ChEBI" id="CHEBI:15379"/>
        <dbReference type="ChEBI" id="CHEBI:57618"/>
        <dbReference type="ChEBI" id="CHEBI:58210"/>
        <dbReference type="ChEBI" id="CHEBI:194328"/>
        <dbReference type="ChEBI" id="CHEBI:194329"/>
    </reaction>
    <physiologicalReaction direction="left-to-right" evidence="1">
        <dbReference type="Rhea" id="RHEA:75432"/>
    </physiologicalReaction>
</comment>
<comment type="catalytic activity">
    <reaction evidence="1">
        <text>32-oxoeburicol + reduced [NADPH--hemoprotein reductase] + O2 = 14-demethyleburicol + formate + oxidized [NADPH--hemoprotein reductase] + H2O + 2 H(+)</text>
        <dbReference type="Rhea" id="RHEA:75435"/>
        <dbReference type="Rhea" id="RHEA-COMP:11964"/>
        <dbReference type="Rhea" id="RHEA-COMP:11965"/>
        <dbReference type="ChEBI" id="CHEBI:15377"/>
        <dbReference type="ChEBI" id="CHEBI:15378"/>
        <dbReference type="ChEBI" id="CHEBI:15379"/>
        <dbReference type="ChEBI" id="CHEBI:15740"/>
        <dbReference type="ChEBI" id="CHEBI:57618"/>
        <dbReference type="ChEBI" id="CHEBI:58210"/>
        <dbReference type="ChEBI" id="CHEBI:194329"/>
        <dbReference type="ChEBI" id="CHEBI:194330"/>
    </reaction>
    <physiologicalReaction direction="left-to-right" evidence="1">
        <dbReference type="Rhea" id="RHEA:75436"/>
    </physiologicalReaction>
</comment>
<comment type="cofactor">
    <cofactor evidence="2">
        <name>heme</name>
        <dbReference type="ChEBI" id="CHEBI:30413"/>
    </cofactor>
</comment>
<comment type="pathway">
    <text evidence="3">Steroid biosynthesis; sterol biosynthesis.</text>
</comment>
<comment type="subcellular location">
    <subcellularLocation>
        <location evidence="4">Membrane</location>
        <topology evidence="4">Single-pass membrane protein</topology>
    </subcellularLocation>
</comment>
<comment type="similarity">
    <text evidence="7">Belongs to the cytochrome P450 family.</text>
</comment>
<gene>
    <name evidence="6" type="primary">rstn2</name>
    <name type="ORF">ANOM_001443</name>
</gene>
<protein>
    <recommendedName>
        <fullName evidence="6">Sterol 14-alpha demethylase rstn2</fullName>
        <ecNumber evidence="5">1.14.14.154</ecNumber>
    </recommendedName>
    <alternativeName>
        <fullName evidence="6">Cytochrome P450 monooxygenase rstn2</fullName>
    </alternativeName>
    <alternativeName>
        <fullName evidence="6">Ergosterol biosynthesis protein rstn2</fullName>
    </alternativeName>
    <alternativeName>
        <fullName evidence="6">Restricticin biosynthesis cluster protein 2</fullName>
    </alternativeName>
</protein>
<dbReference type="EC" id="1.14.14.154" evidence="5"/>
<dbReference type="EMBL" id="JNOM01000015">
    <property type="protein sequence ID" value="KNG90320.1"/>
    <property type="molecule type" value="Genomic_DNA"/>
</dbReference>
<dbReference type="RefSeq" id="XP_015411243.1">
    <property type="nucleotide sequence ID" value="XM_015546700.1"/>
</dbReference>
<dbReference type="STRING" id="1509407.A0A0L1JEW4"/>
<dbReference type="GeneID" id="26803247"/>
<dbReference type="OrthoDB" id="25599at5052"/>
<dbReference type="UniPathway" id="UPA00766"/>
<dbReference type="Proteomes" id="UP000037505">
    <property type="component" value="Unassembled WGS sequence"/>
</dbReference>
<dbReference type="GO" id="GO:0016020">
    <property type="term" value="C:membrane"/>
    <property type="evidence" value="ECO:0007669"/>
    <property type="project" value="UniProtKB-SubCell"/>
</dbReference>
<dbReference type="GO" id="GO:0020037">
    <property type="term" value="F:heme binding"/>
    <property type="evidence" value="ECO:0007669"/>
    <property type="project" value="InterPro"/>
</dbReference>
<dbReference type="GO" id="GO:0005506">
    <property type="term" value="F:iron ion binding"/>
    <property type="evidence" value="ECO:0007669"/>
    <property type="project" value="InterPro"/>
</dbReference>
<dbReference type="GO" id="GO:0004497">
    <property type="term" value="F:monooxygenase activity"/>
    <property type="evidence" value="ECO:0007669"/>
    <property type="project" value="UniProtKB-KW"/>
</dbReference>
<dbReference type="GO" id="GO:0016705">
    <property type="term" value="F:oxidoreductase activity, acting on paired donors, with incorporation or reduction of molecular oxygen"/>
    <property type="evidence" value="ECO:0007669"/>
    <property type="project" value="InterPro"/>
</dbReference>
<dbReference type="GO" id="GO:0016126">
    <property type="term" value="P:sterol biosynthetic process"/>
    <property type="evidence" value="ECO:0007669"/>
    <property type="project" value="UniProtKB-KW"/>
</dbReference>
<dbReference type="CDD" id="cd11042">
    <property type="entry name" value="CYP51-like"/>
    <property type="match status" value="1"/>
</dbReference>
<dbReference type="FunFam" id="1.10.630.10:FF:000033">
    <property type="entry name" value="14-alpha sterol demethylase"/>
    <property type="match status" value="1"/>
</dbReference>
<dbReference type="Gene3D" id="1.10.630.10">
    <property type="entry name" value="Cytochrome P450"/>
    <property type="match status" value="1"/>
</dbReference>
<dbReference type="InterPro" id="IPR050529">
    <property type="entry name" value="CYP450_sterol_14alpha_dmase"/>
</dbReference>
<dbReference type="InterPro" id="IPR001128">
    <property type="entry name" value="Cyt_P450"/>
</dbReference>
<dbReference type="InterPro" id="IPR017972">
    <property type="entry name" value="Cyt_P450_CS"/>
</dbReference>
<dbReference type="InterPro" id="IPR002403">
    <property type="entry name" value="Cyt_P450_E_grp-IV"/>
</dbReference>
<dbReference type="InterPro" id="IPR036396">
    <property type="entry name" value="Cyt_P450_sf"/>
</dbReference>
<dbReference type="PANTHER" id="PTHR24304:SF2">
    <property type="entry name" value="24-HYDROXYCHOLESTEROL 7-ALPHA-HYDROXYLASE"/>
    <property type="match status" value="1"/>
</dbReference>
<dbReference type="PANTHER" id="PTHR24304">
    <property type="entry name" value="CYTOCHROME P450 FAMILY 7"/>
    <property type="match status" value="1"/>
</dbReference>
<dbReference type="Pfam" id="PF00067">
    <property type="entry name" value="p450"/>
    <property type="match status" value="1"/>
</dbReference>
<dbReference type="PRINTS" id="PR00465">
    <property type="entry name" value="EP450IV"/>
</dbReference>
<dbReference type="PRINTS" id="PR00385">
    <property type="entry name" value="P450"/>
</dbReference>
<dbReference type="SUPFAM" id="SSF48264">
    <property type="entry name" value="Cytochrome P450"/>
    <property type="match status" value="1"/>
</dbReference>
<dbReference type="PROSITE" id="PS00086">
    <property type="entry name" value="CYTOCHROME_P450"/>
    <property type="match status" value="1"/>
</dbReference>
<evidence type="ECO:0000250" key="1">
    <source>
        <dbReference type="UniProtKB" id="P10614"/>
    </source>
</evidence>
<evidence type="ECO:0000250" key="2">
    <source>
        <dbReference type="UniProtKB" id="Q16850"/>
    </source>
</evidence>
<evidence type="ECO:0000250" key="3">
    <source>
        <dbReference type="UniProtKB" id="Q4WNT5"/>
    </source>
</evidence>
<evidence type="ECO:0000255" key="4"/>
<evidence type="ECO:0000269" key="5">
    <source>
    </source>
</evidence>
<evidence type="ECO:0000303" key="6">
    <source>
    </source>
</evidence>
<evidence type="ECO:0000305" key="7"/>
<organism>
    <name type="scientific">Aspergillus nomiae NRRL (strain ATCC 15546 / NRRL 13137 / CBS 260.88 / M93)</name>
    <dbReference type="NCBI Taxonomy" id="1509407"/>
    <lineage>
        <taxon>Eukaryota</taxon>
        <taxon>Fungi</taxon>
        <taxon>Dikarya</taxon>
        <taxon>Ascomycota</taxon>
        <taxon>Pezizomycotina</taxon>
        <taxon>Eurotiomycetes</taxon>
        <taxon>Eurotiomycetidae</taxon>
        <taxon>Eurotiales</taxon>
        <taxon>Aspergillaceae</taxon>
        <taxon>Aspergillus</taxon>
        <taxon>Aspergillus subgen. Circumdati</taxon>
    </lineage>
</organism>
<accession>A0A0L1JEW4</accession>
<keyword id="KW-0349">Heme</keyword>
<keyword id="KW-0408">Iron</keyword>
<keyword id="KW-0444">Lipid biosynthesis</keyword>
<keyword id="KW-0443">Lipid metabolism</keyword>
<keyword id="KW-0472">Membrane</keyword>
<keyword id="KW-0479">Metal-binding</keyword>
<keyword id="KW-0503">Monooxygenase</keyword>
<keyword id="KW-0560">Oxidoreductase</keyword>
<keyword id="KW-1185">Reference proteome</keyword>
<keyword id="KW-0752">Steroid biosynthesis</keyword>
<keyword id="KW-0753">Steroid metabolism</keyword>
<keyword id="KW-0756">Sterol biosynthesis</keyword>
<keyword id="KW-1207">Sterol metabolism</keyword>
<keyword id="KW-0812">Transmembrane</keyword>
<keyword id="KW-1133">Transmembrane helix</keyword>
<sequence length="513" mass="57446">MSWPLIGAYALLAFVAIIALNVTYQFLFRLLNKTRPPLVFHWIPFIGSTIHYGMDPYGFFFSCREKYGDIFTFILLGRPTTVYLGTQGNEFILNGKLKDVNAEEVYSPLTTPVFGSDVVYDCPNSKLIEQKKFIKFGLSQTALEAHVPLIEKEVEDYLAMSPNFHGTSGEVDITAAMAEITIFTAGSALQGEEVRSKLTTEFAVLYHDLDKGFTPINFMLPWAPLPHNKKRDAAHARMRAIYIDIINKRRNAGDNVPEKLDMIGNLMQCTYKNGQPLPDKEIAHIMITLLMAGQHSSSSISSWIMLRLASQPAVVEELYQEQLANLERTGPNNSLAPLQYKDFDNLPLHQNVIRETLRLNSSIHSLMRKVKNPLPVPGTPYVIPTSHVLLSAPGVTALSDEYFPNAMAWDPHRWETQAPKENDKDDIVDYGYGAISKGTSSPYLPFGAGRHRCIGEKFAYLNLAVIVATMVRHLRFSNLDGQTGVPATDYSSLFSGPMKPARIRWERRAAKSG</sequence>
<reference key="1">
    <citation type="journal article" date="2015" name="BMC Genomics">
        <title>Genomic sequence of the aflatoxigenic filamentous fungus Aspergillus nomius.</title>
        <authorList>
            <person name="Moore G.G."/>
            <person name="Mack B.M."/>
            <person name="Beltz S.B."/>
        </authorList>
    </citation>
    <scope>NUCLEOTIDE SEQUENCE [LARGE SCALE GENOMIC DNA]</scope>
    <source>
        <strain>ATCC 15546 / NRRL 13137 / CBS 260.88 / M93</strain>
    </source>
</reference>
<reference key="2">
    <citation type="journal article" date="2021" name="J. Am. Chem. Soc.">
        <title>Targeted genome mining reveals the biosynthetic gene clusters of natural product CYP51 inhibitors.</title>
        <authorList>
            <person name="Liu N."/>
            <person name="Abramyan E.D."/>
            <person name="Cheng W."/>
            <person name="Perlatti B."/>
            <person name="Harvey C.J.B."/>
            <person name="Bills G.F."/>
            <person name="Tang Y."/>
        </authorList>
    </citation>
    <scope>FUNCTION</scope>
    <scope>CATALYTIC ACTIVITY</scope>
    <scope>PATHWAY</scope>
</reference>
<name>RSTN2_ASPN3</name>